<proteinExistence type="inferred from homology"/>
<protein>
    <recommendedName>
        <fullName>Spore germination protein KA</fullName>
    </recommendedName>
</protein>
<keyword id="KW-1003">Cell membrane</keyword>
<keyword id="KW-0309">Germination</keyword>
<keyword id="KW-0472">Membrane</keyword>
<keyword id="KW-1185">Reference proteome</keyword>
<keyword id="KW-0812">Transmembrane</keyword>
<keyword id="KW-1133">Transmembrane helix</keyword>
<evidence type="ECO:0000255" key="1"/>
<evidence type="ECO:0000256" key="2">
    <source>
        <dbReference type="SAM" id="MobiDB-lite"/>
    </source>
</evidence>
<evidence type="ECO:0000305" key="3"/>
<feature type="chain" id="PRO_0000164016" description="Spore germination protein KA">
    <location>
        <begin position="1"/>
        <end position="544"/>
    </location>
</feature>
<feature type="transmembrane region" description="Helical" evidence="1">
    <location>
        <begin position="279"/>
        <end position="299"/>
    </location>
</feature>
<feature type="transmembrane region" description="Helical" evidence="1">
    <location>
        <begin position="321"/>
        <end position="341"/>
    </location>
</feature>
<feature type="transmembrane region" description="Helical" evidence="1">
    <location>
        <begin position="392"/>
        <end position="412"/>
    </location>
</feature>
<feature type="transmembrane region" description="Helical" evidence="1">
    <location>
        <begin position="416"/>
        <end position="436"/>
    </location>
</feature>
<feature type="transmembrane region" description="Helical" evidence="1">
    <location>
        <begin position="443"/>
        <end position="463"/>
    </location>
</feature>
<feature type="region of interest" description="Disordered" evidence="2">
    <location>
        <begin position="1"/>
        <end position="36"/>
    </location>
</feature>
<feature type="region of interest" description="Disordered" evidence="2">
    <location>
        <begin position="504"/>
        <end position="544"/>
    </location>
</feature>
<feature type="compositionally biased region" description="Basic and acidic residues" evidence="2">
    <location>
        <begin position="9"/>
        <end position="33"/>
    </location>
</feature>
<feature type="compositionally biased region" description="Basic and acidic residues" evidence="2">
    <location>
        <begin position="504"/>
        <end position="523"/>
    </location>
</feature>
<feature type="sequence conflict" description="In Ref. 1; BAA11254." evidence="3" ref="1">
    <original>P</original>
    <variation>R</variation>
    <location>
        <position position="2"/>
    </location>
</feature>
<feature type="sequence conflict" description="In Ref. 1; BAA11254." evidence="3" ref="1">
    <original>Q</original>
    <variation>E</variation>
    <location>
        <position position="108"/>
    </location>
</feature>
<feature type="sequence conflict" description="In Ref. 1; BAA11254." evidence="3" ref="1">
    <original>E</original>
    <variation>R</variation>
    <location>
        <position position="111"/>
    </location>
</feature>
<feature type="sequence conflict" description="In Ref. 1; BAA11254." evidence="3" ref="1">
    <original>L</original>
    <variation>A</variation>
    <location>
        <position position="114"/>
    </location>
</feature>
<feature type="sequence conflict" description="In Ref. 1; BAA11254." evidence="3" ref="1">
    <original>E</original>
    <variation>G</variation>
    <location>
        <position position="199"/>
    </location>
</feature>
<feature type="sequence conflict" description="In Ref. 1; BAA11254." evidence="3" ref="1">
    <original>K</original>
    <variation>E</variation>
    <location>
        <position position="202"/>
    </location>
</feature>
<feature type="sequence conflict" description="In Ref. 1; BAA11254." evidence="3" ref="1">
    <original>E</original>
    <variation>K</variation>
    <location>
        <position position="376"/>
    </location>
</feature>
<gene>
    <name type="primary">gerKA</name>
    <name type="ordered locus">BSU03700</name>
</gene>
<accession>P49939</accession>
<accession>P94410</accession>
<reference key="1">
    <citation type="submission" date="1995-11" db="EMBL/GenBank/DDBJ databases">
        <title>Nucleotide sequence and gene organization of the gerK spore germinating locus of Bacillus subtilis 168.</title>
        <authorList>
            <person name="Irie R."/>
            <person name="Fujita Y.Y.F."/>
            <person name="Kobayasi M."/>
        </authorList>
    </citation>
    <scope>NUCLEOTIDE SEQUENCE [GENOMIC DNA]</scope>
    <source>
        <strain>168</strain>
    </source>
</reference>
<reference key="2">
    <citation type="journal article" date="1996" name="Microbiology">
        <title>The 25 degrees-36 degrees region of the Bacillus subtilis chromosome: determination of the sequence of a 146 kb segment and identification of 113 genes.</title>
        <authorList>
            <person name="Yamane K."/>
            <person name="Kumano M."/>
            <person name="Kurita K."/>
        </authorList>
    </citation>
    <scope>NUCLEOTIDE SEQUENCE [GENOMIC DNA]</scope>
    <source>
        <strain>168</strain>
    </source>
</reference>
<reference key="3">
    <citation type="journal article" date="1997" name="Nature">
        <title>The complete genome sequence of the Gram-positive bacterium Bacillus subtilis.</title>
        <authorList>
            <person name="Kunst F."/>
            <person name="Ogasawara N."/>
            <person name="Moszer I."/>
            <person name="Albertini A.M."/>
            <person name="Alloni G."/>
            <person name="Azevedo V."/>
            <person name="Bertero M.G."/>
            <person name="Bessieres P."/>
            <person name="Bolotin A."/>
            <person name="Borchert S."/>
            <person name="Borriss R."/>
            <person name="Boursier L."/>
            <person name="Brans A."/>
            <person name="Braun M."/>
            <person name="Brignell S.C."/>
            <person name="Bron S."/>
            <person name="Brouillet S."/>
            <person name="Bruschi C.V."/>
            <person name="Caldwell B."/>
            <person name="Capuano V."/>
            <person name="Carter N.M."/>
            <person name="Choi S.-K."/>
            <person name="Codani J.-J."/>
            <person name="Connerton I.F."/>
            <person name="Cummings N.J."/>
            <person name="Daniel R.A."/>
            <person name="Denizot F."/>
            <person name="Devine K.M."/>
            <person name="Duesterhoeft A."/>
            <person name="Ehrlich S.D."/>
            <person name="Emmerson P.T."/>
            <person name="Entian K.-D."/>
            <person name="Errington J."/>
            <person name="Fabret C."/>
            <person name="Ferrari E."/>
            <person name="Foulger D."/>
            <person name="Fritz C."/>
            <person name="Fujita M."/>
            <person name="Fujita Y."/>
            <person name="Fuma S."/>
            <person name="Galizzi A."/>
            <person name="Galleron N."/>
            <person name="Ghim S.-Y."/>
            <person name="Glaser P."/>
            <person name="Goffeau A."/>
            <person name="Golightly E.J."/>
            <person name="Grandi G."/>
            <person name="Guiseppi G."/>
            <person name="Guy B.J."/>
            <person name="Haga K."/>
            <person name="Haiech J."/>
            <person name="Harwood C.R."/>
            <person name="Henaut A."/>
            <person name="Hilbert H."/>
            <person name="Holsappel S."/>
            <person name="Hosono S."/>
            <person name="Hullo M.-F."/>
            <person name="Itaya M."/>
            <person name="Jones L.-M."/>
            <person name="Joris B."/>
            <person name="Karamata D."/>
            <person name="Kasahara Y."/>
            <person name="Klaerr-Blanchard M."/>
            <person name="Klein C."/>
            <person name="Kobayashi Y."/>
            <person name="Koetter P."/>
            <person name="Koningstein G."/>
            <person name="Krogh S."/>
            <person name="Kumano M."/>
            <person name="Kurita K."/>
            <person name="Lapidus A."/>
            <person name="Lardinois S."/>
            <person name="Lauber J."/>
            <person name="Lazarevic V."/>
            <person name="Lee S.-M."/>
            <person name="Levine A."/>
            <person name="Liu H."/>
            <person name="Masuda S."/>
            <person name="Mauel C."/>
            <person name="Medigue C."/>
            <person name="Medina N."/>
            <person name="Mellado R.P."/>
            <person name="Mizuno M."/>
            <person name="Moestl D."/>
            <person name="Nakai S."/>
            <person name="Noback M."/>
            <person name="Noone D."/>
            <person name="O'Reilly M."/>
            <person name="Ogawa K."/>
            <person name="Ogiwara A."/>
            <person name="Oudega B."/>
            <person name="Park S.-H."/>
            <person name="Parro V."/>
            <person name="Pohl T.M."/>
            <person name="Portetelle D."/>
            <person name="Porwollik S."/>
            <person name="Prescott A.M."/>
            <person name="Presecan E."/>
            <person name="Pujic P."/>
            <person name="Purnelle B."/>
            <person name="Rapoport G."/>
            <person name="Rey M."/>
            <person name="Reynolds S."/>
            <person name="Rieger M."/>
            <person name="Rivolta C."/>
            <person name="Rocha E."/>
            <person name="Roche B."/>
            <person name="Rose M."/>
            <person name="Sadaie Y."/>
            <person name="Sato T."/>
            <person name="Scanlan E."/>
            <person name="Schleich S."/>
            <person name="Schroeter R."/>
            <person name="Scoffone F."/>
            <person name="Sekiguchi J."/>
            <person name="Sekowska A."/>
            <person name="Seror S.J."/>
            <person name="Serror P."/>
            <person name="Shin B.-S."/>
            <person name="Soldo B."/>
            <person name="Sorokin A."/>
            <person name="Tacconi E."/>
            <person name="Takagi T."/>
            <person name="Takahashi H."/>
            <person name="Takemaru K."/>
            <person name="Takeuchi M."/>
            <person name="Tamakoshi A."/>
            <person name="Tanaka T."/>
            <person name="Terpstra P."/>
            <person name="Tognoni A."/>
            <person name="Tosato V."/>
            <person name="Uchiyama S."/>
            <person name="Vandenbol M."/>
            <person name="Vannier F."/>
            <person name="Vassarotti A."/>
            <person name="Viari A."/>
            <person name="Wambutt R."/>
            <person name="Wedler E."/>
            <person name="Wedler H."/>
            <person name="Weitzenegger T."/>
            <person name="Winters P."/>
            <person name="Wipat A."/>
            <person name="Yamamoto H."/>
            <person name="Yamane K."/>
            <person name="Yasumoto K."/>
            <person name="Yata K."/>
            <person name="Yoshida K."/>
            <person name="Yoshikawa H.-F."/>
            <person name="Zumstein E."/>
            <person name="Yoshikawa H."/>
            <person name="Danchin A."/>
        </authorList>
    </citation>
    <scope>NUCLEOTIDE SEQUENCE [LARGE SCALE GENOMIC DNA]</scope>
    <source>
        <strain>168</strain>
    </source>
</reference>
<organism>
    <name type="scientific">Bacillus subtilis (strain 168)</name>
    <dbReference type="NCBI Taxonomy" id="224308"/>
    <lineage>
        <taxon>Bacteria</taxon>
        <taxon>Bacillati</taxon>
        <taxon>Bacillota</taxon>
        <taxon>Bacilli</taxon>
        <taxon>Bacillales</taxon>
        <taxon>Bacillaceae</taxon>
        <taxon>Bacillus</taxon>
    </lineage>
</organism>
<sequence length="544" mass="60386">MPLFSKRKNNTDSKDKQNTDERNQEQQQEKERPVLISPSLAKNIAETKKEVGSSSDVIIREIKIGEQDHVHLAVIYISGLVDNNTIHESLIDPLVQDESIQNTHAIQQILEKTLPLGGVKAEKSWDKLFSELMLGNALIFADGHDEALICSTQGGEQRSIQEPSTQVSFRGPRQGFTESLQTNISMIRRYIKNPNLWVEKMKKGSVTNTDIALMYIQGICDEKVLKEVKQRLEKIDIDSILESGYIEQLIEDETFTTFPTMYHTERPDVVAGNLLEGRFAIIVDGTPFVLIAPALFVQFFQSVEDYYSRFDIATSIRILRVLVFFISLVAPAVYVAATTFHQEMIPTQLLVVIAAQREIVPFPAVVEALTMEVAFEILREAGVRLPRVVGSAVSIVGALVIGQAAVQAGIVSPAMVIIVALTAIASFATPAFAMAISARLIRFIFIIASAVMGFYGLILGIIMMFVHLCSLRSFGVPYMSPLAPFSSQGVKDALFRVPWWADEKRPESVSKEDKVRQGKDQRPEPAASRGMVNKDLEEGDQNGT</sequence>
<dbReference type="EMBL" id="D78187">
    <property type="protein sequence ID" value="BAA11254.1"/>
    <property type="status" value="ALT_INIT"/>
    <property type="molecule type" value="Genomic_DNA"/>
</dbReference>
<dbReference type="EMBL" id="D50453">
    <property type="protein sequence ID" value="BAA09002.1"/>
    <property type="molecule type" value="Genomic_DNA"/>
</dbReference>
<dbReference type="EMBL" id="AL009126">
    <property type="protein sequence ID" value="CAB12178.1"/>
    <property type="molecule type" value="Genomic_DNA"/>
</dbReference>
<dbReference type="PIR" id="I39858">
    <property type="entry name" value="I39858"/>
</dbReference>
<dbReference type="RefSeq" id="NP_388252.1">
    <property type="nucleotide sequence ID" value="NC_000964.3"/>
</dbReference>
<dbReference type="RefSeq" id="WP_003246515.1">
    <property type="nucleotide sequence ID" value="NZ_OZ025638.1"/>
</dbReference>
<dbReference type="SMR" id="P49939"/>
<dbReference type="FunCoup" id="P49939">
    <property type="interactions" value="155"/>
</dbReference>
<dbReference type="STRING" id="224308.BSU03700"/>
<dbReference type="PaxDb" id="224308-BSU03700"/>
<dbReference type="EnsemblBacteria" id="CAB12178">
    <property type="protein sequence ID" value="CAB12178"/>
    <property type="gene ID" value="BSU_03700"/>
</dbReference>
<dbReference type="GeneID" id="938285"/>
<dbReference type="KEGG" id="bsu:BSU03700"/>
<dbReference type="PATRIC" id="fig|224308.179.peg.390"/>
<dbReference type="eggNOG" id="COG0697">
    <property type="taxonomic scope" value="Bacteria"/>
</dbReference>
<dbReference type="InParanoid" id="P49939"/>
<dbReference type="OrthoDB" id="9772630at2"/>
<dbReference type="PhylomeDB" id="P49939"/>
<dbReference type="BioCyc" id="BSUB:BSU03700-MONOMER"/>
<dbReference type="Proteomes" id="UP000001570">
    <property type="component" value="Chromosome"/>
</dbReference>
<dbReference type="GO" id="GO:0005886">
    <property type="term" value="C:plasma membrane"/>
    <property type="evidence" value="ECO:0007669"/>
    <property type="project" value="UniProtKB-SubCell"/>
</dbReference>
<dbReference type="GO" id="GO:0009847">
    <property type="term" value="P:spore germination"/>
    <property type="evidence" value="ECO:0007669"/>
    <property type="project" value="InterPro"/>
</dbReference>
<dbReference type="InterPro" id="IPR004995">
    <property type="entry name" value="Spore_Ger"/>
</dbReference>
<dbReference type="InterPro" id="IPR050768">
    <property type="entry name" value="UPF0353/GerABKA_families"/>
</dbReference>
<dbReference type="PANTHER" id="PTHR22550:SF5">
    <property type="entry name" value="LEUCINE ZIPPER PROTEIN 4"/>
    <property type="match status" value="1"/>
</dbReference>
<dbReference type="PANTHER" id="PTHR22550">
    <property type="entry name" value="SPORE GERMINATION PROTEIN"/>
    <property type="match status" value="1"/>
</dbReference>
<dbReference type="Pfam" id="PF03323">
    <property type="entry name" value="GerA"/>
    <property type="match status" value="1"/>
</dbReference>
<dbReference type="PIRSF" id="PIRSF005690">
    <property type="entry name" value="GerBA"/>
    <property type="match status" value="1"/>
</dbReference>
<comment type="function">
    <text>Involved in the germination response to the combination of glucose, fructose, L-asparagine, and KCl.</text>
</comment>
<comment type="subcellular location">
    <subcellularLocation>
        <location evidence="3">Cell membrane</location>
        <topology evidence="3">Multi-pass membrane protein</topology>
    </subcellularLocation>
</comment>
<comment type="similarity">
    <text evidence="3">Belongs to the GerABKA family.</text>
</comment>
<comment type="sequence caution" evidence="3">
    <conflict type="erroneous initiation">
        <sequence resource="EMBL-CDS" id="BAA11254"/>
    </conflict>
</comment>
<name>GERKA_BACSU</name>